<reference key="1">
    <citation type="journal article" date="2002" name="Nucleic Acids Res.">
        <title>Genome sequence of Shigella flexneri 2a: insights into pathogenicity through comparison with genomes of Escherichia coli K12 and O157.</title>
        <authorList>
            <person name="Jin Q."/>
            <person name="Yuan Z."/>
            <person name="Xu J."/>
            <person name="Wang Y."/>
            <person name="Shen Y."/>
            <person name="Lu W."/>
            <person name="Wang J."/>
            <person name="Liu H."/>
            <person name="Yang J."/>
            <person name="Yang F."/>
            <person name="Zhang X."/>
            <person name="Zhang J."/>
            <person name="Yang G."/>
            <person name="Wu H."/>
            <person name="Qu D."/>
            <person name="Dong J."/>
            <person name="Sun L."/>
            <person name="Xue Y."/>
            <person name="Zhao A."/>
            <person name="Gao Y."/>
            <person name="Zhu J."/>
            <person name="Kan B."/>
            <person name="Ding K."/>
            <person name="Chen S."/>
            <person name="Cheng H."/>
            <person name="Yao Z."/>
            <person name="He B."/>
            <person name="Chen R."/>
            <person name="Ma D."/>
            <person name="Qiang B."/>
            <person name="Wen Y."/>
            <person name="Hou Y."/>
            <person name="Yu J."/>
        </authorList>
    </citation>
    <scope>NUCLEOTIDE SEQUENCE [LARGE SCALE GENOMIC DNA]</scope>
    <source>
        <strain>301 / Serotype 2a</strain>
    </source>
</reference>
<reference key="2">
    <citation type="journal article" date="2003" name="Infect. Immun.">
        <title>Complete genome sequence and comparative genomics of Shigella flexneri serotype 2a strain 2457T.</title>
        <authorList>
            <person name="Wei J."/>
            <person name="Goldberg M.B."/>
            <person name="Burland V."/>
            <person name="Venkatesan M.M."/>
            <person name="Deng W."/>
            <person name="Fournier G."/>
            <person name="Mayhew G.F."/>
            <person name="Plunkett G. III"/>
            <person name="Rose D.J."/>
            <person name="Darling A."/>
            <person name="Mau B."/>
            <person name="Perna N.T."/>
            <person name="Payne S.M."/>
            <person name="Runyen-Janecky L.J."/>
            <person name="Zhou S."/>
            <person name="Schwartz D.C."/>
            <person name="Blattner F.R."/>
        </authorList>
    </citation>
    <scope>NUCLEOTIDE SEQUENCE [LARGE SCALE GENOMIC DNA]</scope>
    <source>
        <strain>ATCC 700930 / 2457T / Serotype 2a</strain>
    </source>
</reference>
<dbReference type="EMBL" id="AE005674">
    <property type="protein sequence ID" value="AAN44838.1"/>
    <property type="molecule type" value="Genomic_DNA"/>
</dbReference>
<dbReference type="EMBL" id="AE014073">
    <property type="protein sequence ID" value="AAP19340.1"/>
    <property type="molecule type" value="Genomic_DNA"/>
</dbReference>
<dbReference type="RefSeq" id="NP_709131.1">
    <property type="nucleotide sequence ID" value="NC_004337.2"/>
</dbReference>
<dbReference type="RefSeq" id="WP_001148908.1">
    <property type="nucleotide sequence ID" value="NZ_WPGW01000003.1"/>
</dbReference>
<dbReference type="SMR" id="P0ADX4"/>
<dbReference type="STRING" id="198214.SF3375"/>
<dbReference type="PaxDb" id="198214-SF3375"/>
<dbReference type="GeneID" id="1027005"/>
<dbReference type="KEGG" id="sfl:SF3375"/>
<dbReference type="KEGG" id="sfx:S4388"/>
<dbReference type="PATRIC" id="fig|198214.7.peg.3985"/>
<dbReference type="HOGENOM" id="CLU_114057_1_2_6"/>
<dbReference type="Proteomes" id="UP000001006">
    <property type="component" value="Chromosome"/>
</dbReference>
<dbReference type="Proteomes" id="UP000002673">
    <property type="component" value="Chromosome"/>
</dbReference>
<dbReference type="Gene3D" id="2.20.25.10">
    <property type="match status" value="1"/>
</dbReference>
<dbReference type="Gene3D" id="3.30.300.20">
    <property type="match status" value="1"/>
</dbReference>
<dbReference type="InterPro" id="IPR015946">
    <property type="entry name" value="KH_dom-like_a/b"/>
</dbReference>
<dbReference type="InterPro" id="IPR003718">
    <property type="entry name" value="OsmC/Ohr_fam"/>
</dbReference>
<dbReference type="InterPro" id="IPR036102">
    <property type="entry name" value="OsmC/Ohrsf"/>
</dbReference>
<dbReference type="NCBIfam" id="NF008009">
    <property type="entry name" value="PRK10738.1"/>
    <property type="match status" value="1"/>
</dbReference>
<dbReference type="PANTHER" id="PTHR34352">
    <property type="entry name" value="PROTEIN YHFA"/>
    <property type="match status" value="1"/>
</dbReference>
<dbReference type="PANTHER" id="PTHR34352:SF1">
    <property type="entry name" value="PROTEIN YHFA"/>
    <property type="match status" value="1"/>
</dbReference>
<dbReference type="Pfam" id="PF02566">
    <property type="entry name" value="OsmC"/>
    <property type="match status" value="1"/>
</dbReference>
<dbReference type="SUPFAM" id="SSF82784">
    <property type="entry name" value="OsmC-like"/>
    <property type="match status" value="1"/>
</dbReference>
<organism>
    <name type="scientific">Shigella flexneri</name>
    <dbReference type="NCBI Taxonomy" id="623"/>
    <lineage>
        <taxon>Bacteria</taxon>
        <taxon>Pseudomonadati</taxon>
        <taxon>Pseudomonadota</taxon>
        <taxon>Gammaproteobacteria</taxon>
        <taxon>Enterobacterales</taxon>
        <taxon>Enterobacteriaceae</taxon>
        <taxon>Shigella</taxon>
    </lineage>
</organism>
<sequence>MQARVKWVEGLTFLGESASGHQILMDGNSGDKAPSPMEMVLMAAGGCSAIDVVSILQKGRQDVVDCEVKLTSERREEAPRLFTHINLHFIVTGRDLKDAAVARAVDLSAEKYCSVALMLEKAVNITHSYEVVAA</sequence>
<gene>
    <name type="primary">yhfA</name>
    <name type="ordered locus">SF3375</name>
    <name type="ordered locus">S4388</name>
</gene>
<name>YHFA_SHIFL</name>
<protein>
    <recommendedName>
        <fullName>Protein YhfA</fullName>
    </recommendedName>
</protein>
<accession>P0ADX4</accession>
<accession>P24246</accession>
<keyword id="KW-1185">Reference proteome</keyword>
<feature type="chain" id="PRO_0000169519" description="Protein YhfA">
    <location>
        <begin position="1"/>
        <end position="134"/>
    </location>
</feature>
<proteinExistence type="predicted"/>